<reference key="1">
    <citation type="journal article" date="2004" name="Science">
        <title>Illuminating the evolutionary history of chlamydiae.</title>
        <authorList>
            <person name="Horn M."/>
            <person name="Collingro A."/>
            <person name="Schmitz-Esser S."/>
            <person name="Beier C.L."/>
            <person name="Purkhold U."/>
            <person name="Fartmann B."/>
            <person name="Brandt P."/>
            <person name="Nyakatura G.J."/>
            <person name="Droege M."/>
            <person name="Frishman D."/>
            <person name="Rattei T."/>
            <person name="Mewes H.-W."/>
            <person name="Wagner M."/>
        </authorList>
    </citation>
    <scope>NUCLEOTIDE SEQUENCE [LARGE SCALE GENOMIC DNA]</scope>
    <source>
        <strain>UWE25</strain>
    </source>
</reference>
<proteinExistence type="inferred from homology"/>
<evidence type="ECO:0000255" key="1">
    <source>
        <dbReference type="HAMAP-Rule" id="MF_00059"/>
    </source>
</evidence>
<organism>
    <name type="scientific">Protochlamydia amoebophila (strain UWE25)</name>
    <dbReference type="NCBI Taxonomy" id="264201"/>
    <lineage>
        <taxon>Bacteria</taxon>
        <taxon>Pseudomonadati</taxon>
        <taxon>Chlamydiota</taxon>
        <taxon>Chlamydiia</taxon>
        <taxon>Parachlamydiales</taxon>
        <taxon>Parachlamydiaceae</taxon>
        <taxon>Candidatus Protochlamydia</taxon>
    </lineage>
</organism>
<comment type="function">
    <text evidence="1">DNA-dependent RNA polymerase catalyzes the transcription of DNA into RNA using the four ribonucleoside triphosphates as substrates.</text>
</comment>
<comment type="catalytic activity">
    <reaction evidence="1">
        <text>RNA(n) + a ribonucleoside 5'-triphosphate = RNA(n+1) + diphosphate</text>
        <dbReference type="Rhea" id="RHEA:21248"/>
        <dbReference type="Rhea" id="RHEA-COMP:14527"/>
        <dbReference type="Rhea" id="RHEA-COMP:17342"/>
        <dbReference type="ChEBI" id="CHEBI:33019"/>
        <dbReference type="ChEBI" id="CHEBI:61557"/>
        <dbReference type="ChEBI" id="CHEBI:140395"/>
        <dbReference type="EC" id="2.7.7.6"/>
    </reaction>
</comment>
<comment type="subunit">
    <text evidence="1">Homodimer. The RNAP catalytic core consists of 2 alpha, 1 beta, 1 beta' and 1 omega subunit. When a sigma factor is associated with the core the holoenzyme is formed, which can initiate transcription.</text>
</comment>
<comment type="domain">
    <text evidence="1">The N-terminal domain is essential for RNAP assembly and basal transcription, whereas the C-terminal domain is involved in interaction with transcriptional regulators and with upstream promoter elements.</text>
</comment>
<comment type="similarity">
    <text evidence="1">Belongs to the RNA polymerase alpha chain family.</text>
</comment>
<feature type="chain" id="PRO_0000225286" description="DNA-directed RNA polymerase subunit alpha">
    <location>
        <begin position="1"/>
        <end position="371"/>
    </location>
</feature>
<feature type="region of interest" description="Alpha N-terminal domain (alpha-NTD)" evidence="1">
    <location>
        <begin position="1"/>
        <end position="248"/>
    </location>
</feature>
<feature type="region of interest" description="Alpha C-terminal domain (alpha-CTD)" evidence="1">
    <location>
        <begin position="264"/>
        <end position="371"/>
    </location>
</feature>
<dbReference type="EC" id="2.7.7.6" evidence="1"/>
<dbReference type="EMBL" id="BX908798">
    <property type="protein sequence ID" value="CAF23157.1"/>
    <property type="molecule type" value="Genomic_DNA"/>
</dbReference>
<dbReference type="RefSeq" id="WP_011174983.1">
    <property type="nucleotide sequence ID" value="NC_005861.2"/>
</dbReference>
<dbReference type="SMR" id="Q6ME42"/>
<dbReference type="STRING" id="264201.pc0433"/>
<dbReference type="KEGG" id="pcu:PC_RS02115"/>
<dbReference type="eggNOG" id="COG0202">
    <property type="taxonomic scope" value="Bacteria"/>
</dbReference>
<dbReference type="HOGENOM" id="CLU_053084_0_1_0"/>
<dbReference type="OrthoDB" id="9805706at2"/>
<dbReference type="Proteomes" id="UP000000529">
    <property type="component" value="Chromosome"/>
</dbReference>
<dbReference type="GO" id="GO:0005737">
    <property type="term" value="C:cytoplasm"/>
    <property type="evidence" value="ECO:0007669"/>
    <property type="project" value="UniProtKB-ARBA"/>
</dbReference>
<dbReference type="GO" id="GO:0000428">
    <property type="term" value="C:DNA-directed RNA polymerase complex"/>
    <property type="evidence" value="ECO:0007669"/>
    <property type="project" value="UniProtKB-KW"/>
</dbReference>
<dbReference type="GO" id="GO:0003677">
    <property type="term" value="F:DNA binding"/>
    <property type="evidence" value="ECO:0007669"/>
    <property type="project" value="UniProtKB-UniRule"/>
</dbReference>
<dbReference type="GO" id="GO:0003899">
    <property type="term" value="F:DNA-directed RNA polymerase activity"/>
    <property type="evidence" value="ECO:0007669"/>
    <property type="project" value="UniProtKB-UniRule"/>
</dbReference>
<dbReference type="GO" id="GO:0046983">
    <property type="term" value="F:protein dimerization activity"/>
    <property type="evidence" value="ECO:0007669"/>
    <property type="project" value="InterPro"/>
</dbReference>
<dbReference type="GO" id="GO:0006351">
    <property type="term" value="P:DNA-templated transcription"/>
    <property type="evidence" value="ECO:0007669"/>
    <property type="project" value="UniProtKB-UniRule"/>
</dbReference>
<dbReference type="CDD" id="cd06928">
    <property type="entry name" value="RNAP_alpha_NTD"/>
    <property type="match status" value="1"/>
</dbReference>
<dbReference type="Gene3D" id="1.10.150.20">
    <property type="entry name" value="5' to 3' exonuclease, C-terminal subdomain"/>
    <property type="match status" value="1"/>
</dbReference>
<dbReference type="Gene3D" id="2.170.120.12">
    <property type="entry name" value="DNA-directed RNA polymerase, insert domain"/>
    <property type="match status" value="1"/>
</dbReference>
<dbReference type="Gene3D" id="3.30.1360.10">
    <property type="entry name" value="RNA polymerase, RBP11-like subunit"/>
    <property type="match status" value="1"/>
</dbReference>
<dbReference type="HAMAP" id="MF_00059">
    <property type="entry name" value="RNApol_bact_RpoA"/>
    <property type="match status" value="1"/>
</dbReference>
<dbReference type="InterPro" id="IPR011262">
    <property type="entry name" value="DNA-dir_RNA_pol_insert"/>
</dbReference>
<dbReference type="InterPro" id="IPR011263">
    <property type="entry name" value="DNA-dir_RNA_pol_RpoA/D/Rpb3"/>
</dbReference>
<dbReference type="InterPro" id="IPR011773">
    <property type="entry name" value="DNA-dir_RpoA"/>
</dbReference>
<dbReference type="InterPro" id="IPR036603">
    <property type="entry name" value="RBP11-like"/>
</dbReference>
<dbReference type="InterPro" id="IPR011260">
    <property type="entry name" value="RNAP_asu_C"/>
</dbReference>
<dbReference type="InterPro" id="IPR036643">
    <property type="entry name" value="RNApol_insert_sf"/>
</dbReference>
<dbReference type="NCBIfam" id="NF003513">
    <property type="entry name" value="PRK05182.1-2"/>
    <property type="match status" value="1"/>
</dbReference>
<dbReference type="NCBIfam" id="NF003517">
    <property type="entry name" value="PRK05182.2-3"/>
    <property type="match status" value="1"/>
</dbReference>
<dbReference type="NCBIfam" id="NF003519">
    <property type="entry name" value="PRK05182.2-5"/>
    <property type="match status" value="1"/>
</dbReference>
<dbReference type="NCBIfam" id="TIGR02027">
    <property type="entry name" value="rpoA"/>
    <property type="match status" value="1"/>
</dbReference>
<dbReference type="Pfam" id="PF01000">
    <property type="entry name" value="RNA_pol_A_bac"/>
    <property type="match status" value="1"/>
</dbReference>
<dbReference type="Pfam" id="PF03118">
    <property type="entry name" value="RNA_pol_A_CTD"/>
    <property type="match status" value="1"/>
</dbReference>
<dbReference type="Pfam" id="PF01193">
    <property type="entry name" value="RNA_pol_L"/>
    <property type="match status" value="1"/>
</dbReference>
<dbReference type="SMART" id="SM00662">
    <property type="entry name" value="RPOLD"/>
    <property type="match status" value="1"/>
</dbReference>
<dbReference type="SUPFAM" id="SSF47789">
    <property type="entry name" value="C-terminal domain of RNA polymerase alpha subunit"/>
    <property type="match status" value="1"/>
</dbReference>
<dbReference type="SUPFAM" id="SSF56553">
    <property type="entry name" value="Insert subdomain of RNA polymerase alpha subunit"/>
    <property type="match status" value="1"/>
</dbReference>
<dbReference type="SUPFAM" id="SSF55257">
    <property type="entry name" value="RBP11-like subunits of RNA polymerase"/>
    <property type="match status" value="1"/>
</dbReference>
<name>RPOA_PARUW</name>
<keyword id="KW-0240">DNA-directed RNA polymerase</keyword>
<keyword id="KW-0548">Nucleotidyltransferase</keyword>
<keyword id="KW-1185">Reference proteome</keyword>
<keyword id="KW-0804">Transcription</keyword>
<keyword id="KW-0808">Transferase</keyword>
<protein>
    <recommendedName>
        <fullName evidence="1">DNA-directed RNA polymerase subunit alpha</fullName>
        <shortName evidence="1">RNAP subunit alpha</shortName>
        <ecNumber evidence="1">2.7.7.6</ecNumber>
    </recommendedName>
    <alternativeName>
        <fullName evidence="1">RNA polymerase subunit alpha</fullName>
    </alternativeName>
    <alternativeName>
        <fullName evidence="1">Transcriptase subunit alpha</fullName>
    </alternativeName>
</protein>
<accession>Q6ME42</accession>
<sequence>MSVKYGKFEMPHKITVDQESPESNFARYVAEPFERGFGHTIGNALRRMMLSSLEAPAIISVRVEGIPHEYMAIEGISEDMTNIILNFKGALLRKLPTEETPRDTRILTKVVEVTQDDLDRNQGQYCVTLQDVVQEGNFEIVNPELHLFTVTKPMRRQVDLRIAFGRGYVPSERHVVRDKTSDEILVDAAFSPVRLINYFIENTRVGQDTDFDRLIMEVTTDGRITPAEALSFAVQIGLKHFEVFNQFNNYALSFDEKDGDRNGDQDELMDKLSLGIDEIELSVRSANCLTGANIETLAELVCIPERRMLEFRNFGKKSLNEIKAKLHEMSLHLGMDLSRFGVSPDNVKDKIKQYREEKKKKKELVKHEDAK</sequence>
<gene>
    <name evidence="1" type="primary">rpoA</name>
    <name type="ordered locus">pc0433</name>
</gene>